<dbReference type="EMBL" id="AP006852">
    <property type="protein sequence ID" value="BAE44719.1"/>
    <property type="molecule type" value="Genomic_DNA"/>
</dbReference>
<dbReference type="EMBL" id="CP017629">
    <property type="protein sequence ID" value="AOW30565.1"/>
    <property type="molecule type" value="Genomic_DNA"/>
</dbReference>
<dbReference type="EMBL" id="X81025">
    <property type="status" value="NOT_ANNOTATED_CDS"/>
    <property type="molecule type" value="Genomic_DNA"/>
</dbReference>
<dbReference type="RefSeq" id="XP_721355.1">
    <property type="nucleotide sequence ID" value="XM_716262.1"/>
</dbReference>
<dbReference type="SMR" id="P53709"/>
<dbReference type="FunCoup" id="P53709">
    <property type="interactions" value="104"/>
</dbReference>
<dbReference type="STRING" id="237561.P53709"/>
<dbReference type="EnsemblFungi" id="C7_02020W_A-T">
    <property type="protein sequence ID" value="C7_02020W_A-T-p1"/>
    <property type="gene ID" value="C7_02020W_A"/>
</dbReference>
<dbReference type="GeneID" id="3636953"/>
<dbReference type="KEGG" id="cal:CAALFM_C702020WA"/>
<dbReference type="CGD" id="CAL0000195624">
    <property type="gene designation" value="RAD14"/>
</dbReference>
<dbReference type="VEuPathDB" id="FungiDB:C7_02020W_A"/>
<dbReference type="eggNOG" id="KOG4017">
    <property type="taxonomic scope" value="Eukaryota"/>
</dbReference>
<dbReference type="HOGENOM" id="CLU_053731_0_1_1"/>
<dbReference type="InParanoid" id="P53709"/>
<dbReference type="OMA" id="EFGEDTY"/>
<dbReference type="OrthoDB" id="5368863at2759"/>
<dbReference type="Proteomes" id="UP000000559">
    <property type="component" value="Chromosome 7"/>
</dbReference>
<dbReference type="GO" id="GO:0000110">
    <property type="term" value="C:nucleotide-excision repair factor 1 complex"/>
    <property type="evidence" value="ECO:0000318"/>
    <property type="project" value="GO_Central"/>
</dbReference>
<dbReference type="GO" id="GO:0003684">
    <property type="term" value="F:damaged DNA binding"/>
    <property type="evidence" value="ECO:0000318"/>
    <property type="project" value="GO_Central"/>
</dbReference>
<dbReference type="GO" id="GO:0008270">
    <property type="term" value="F:zinc ion binding"/>
    <property type="evidence" value="ECO:0007669"/>
    <property type="project" value="UniProtKB-KW"/>
</dbReference>
<dbReference type="GO" id="GO:0006284">
    <property type="term" value="P:base-excision repair"/>
    <property type="evidence" value="ECO:0000318"/>
    <property type="project" value="GO_Central"/>
</dbReference>
<dbReference type="GO" id="GO:1901255">
    <property type="term" value="P:nucleotide-excision repair involved in interstrand cross-link repair"/>
    <property type="evidence" value="ECO:0000318"/>
    <property type="project" value="GO_Central"/>
</dbReference>
<dbReference type="GO" id="GO:0000715">
    <property type="term" value="P:nucleotide-excision repair, DNA damage recognition"/>
    <property type="evidence" value="ECO:0000318"/>
    <property type="project" value="GO_Central"/>
</dbReference>
<dbReference type="GO" id="GO:0070914">
    <property type="term" value="P:UV-damage excision repair"/>
    <property type="evidence" value="ECO:0000318"/>
    <property type="project" value="GO_Central"/>
</dbReference>
<dbReference type="CDD" id="cd21077">
    <property type="entry name" value="DBD_Rad14"/>
    <property type="match status" value="1"/>
</dbReference>
<dbReference type="Gene3D" id="3.90.530.10">
    <property type="entry name" value="XPA C-terminal domain"/>
    <property type="match status" value="1"/>
</dbReference>
<dbReference type="InterPro" id="IPR009061">
    <property type="entry name" value="DNA-bd_dom_put_sf"/>
</dbReference>
<dbReference type="InterPro" id="IPR000465">
    <property type="entry name" value="XPA/RAD14"/>
</dbReference>
<dbReference type="InterPro" id="IPR022656">
    <property type="entry name" value="XPA_C"/>
</dbReference>
<dbReference type="InterPro" id="IPR037129">
    <property type="entry name" value="XPA_sf"/>
</dbReference>
<dbReference type="InterPro" id="IPR022652">
    <property type="entry name" value="Znf_XPA_CS"/>
</dbReference>
<dbReference type="NCBIfam" id="TIGR00598">
    <property type="entry name" value="rad14"/>
    <property type="match status" value="1"/>
</dbReference>
<dbReference type="PANTHER" id="PTHR10142">
    <property type="entry name" value="DNA REPAIR PROTEIN COMPLEMENTING XP-A CELLS"/>
    <property type="match status" value="1"/>
</dbReference>
<dbReference type="PANTHER" id="PTHR10142:SF0">
    <property type="entry name" value="DNA REPAIR PROTEIN COMPLEMENTING XP-A CELLS"/>
    <property type="match status" value="1"/>
</dbReference>
<dbReference type="Pfam" id="PF05181">
    <property type="entry name" value="XPA_C"/>
    <property type="match status" value="1"/>
</dbReference>
<dbReference type="Pfam" id="PF01286">
    <property type="entry name" value="XPA_N"/>
    <property type="match status" value="1"/>
</dbReference>
<dbReference type="SUPFAM" id="SSF46955">
    <property type="entry name" value="Putative DNA-binding domain"/>
    <property type="match status" value="1"/>
</dbReference>
<sequence length="396" mass="46540">MASHIRGNLTEEQLKRIEANRKRALERLQQKKKKDAGEHVPSSTPKSTSTTTTKETGSYSPTKTLSQIVNSDSVQVSSKFVEIETDGSVKKRRVLTEEQRQKIEQNRLRAIEIQKNLKQRENQKDDSTTSSKPVDNIRLNQNRPDSVVSSTKKFQPPPIRKQDYIEFDFATMKDTKGGFLQDEKTNTQGADEQTLQDWKNKQRELQKIRELPPPIDLQNIPRCRECQSMEVDANLMTNFNVRACRKCIKALPEKYSLLTKTECKEDYLLTEPELQDTTLLPRIEKPNPHGYSRMQLFVRFQVEEFAWKKWGGPEELDKEWERREENKVKRKEKKYHDQLREMRKRTRAEEYTRKLRDGKSLGERHVHDWSSPVNIDKHTIKRRCIDCGIETEEVVI</sequence>
<feature type="chain" id="PRO_0000208653" description="DNA repair protein RAD14">
    <location>
        <begin position="1"/>
        <end position="396"/>
    </location>
</feature>
<feature type="zinc finger region">
    <location>
        <begin position="223"/>
        <end position="247"/>
    </location>
</feature>
<feature type="region of interest" description="Disordered" evidence="3">
    <location>
        <begin position="20"/>
        <end position="101"/>
    </location>
</feature>
<feature type="region of interest" description="Disordered" evidence="3">
    <location>
        <begin position="116"/>
        <end position="156"/>
    </location>
</feature>
<feature type="compositionally biased region" description="Basic and acidic residues" evidence="3">
    <location>
        <begin position="20"/>
        <end position="29"/>
    </location>
</feature>
<feature type="compositionally biased region" description="Low complexity" evidence="3">
    <location>
        <begin position="41"/>
        <end position="62"/>
    </location>
</feature>
<feature type="compositionally biased region" description="Polar residues" evidence="3">
    <location>
        <begin position="63"/>
        <end position="78"/>
    </location>
</feature>
<feature type="compositionally biased region" description="Basic and acidic residues" evidence="3">
    <location>
        <begin position="118"/>
        <end position="127"/>
    </location>
</feature>
<feature type="compositionally biased region" description="Polar residues" evidence="3">
    <location>
        <begin position="128"/>
        <end position="153"/>
    </location>
</feature>
<feature type="binding site" evidence="2">
    <location>
        <position position="223"/>
    </location>
    <ligand>
        <name>Zn(2+)</name>
        <dbReference type="ChEBI" id="CHEBI:29105"/>
    </ligand>
</feature>
<feature type="binding site" evidence="2">
    <location>
        <position position="226"/>
    </location>
    <ligand>
        <name>Zn(2+)</name>
        <dbReference type="ChEBI" id="CHEBI:29105"/>
    </ligand>
</feature>
<feature type="binding site" evidence="2">
    <location>
        <position position="244"/>
    </location>
    <ligand>
        <name>Zn(2+)</name>
        <dbReference type="ChEBI" id="CHEBI:29105"/>
    </ligand>
</feature>
<feature type="binding site" evidence="2">
    <location>
        <position position="247"/>
    </location>
    <ligand>
        <name>Zn(2+)</name>
        <dbReference type="ChEBI" id="CHEBI:29105"/>
    </ligand>
</feature>
<accession>P53709</accession>
<accession>A0A1D8PR04</accession>
<accession>Q3MPE1</accession>
<accession>Q5AH21</accession>
<comment type="function">
    <text evidence="1">Involved in DNA excision repair.</text>
</comment>
<comment type="subcellular location">
    <subcellularLocation>
        <location>Nucleus</location>
    </subcellularLocation>
</comment>
<comment type="similarity">
    <text evidence="4">Belongs to the XPA family.</text>
</comment>
<keyword id="KW-0227">DNA damage</keyword>
<keyword id="KW-0234">DNA repair</keyword>
<keyword id="KW-0238">DNA-binding</keyword>
<keyword id="KW-0479">Metal-binding</keyword>
<keyword id="KW-0539">Nucleus</keyword>
<keyword id="KW-1185">Reference proteome</keyword>
<keyword id="KW-0862">Zinc</keyword>
<keyword id="KW-0863">Zinc-finger</keyword>
<name>RAD14_CANAL</name>
<proteinExistence type="inferred from homology"/>
<protein>
    <recommendedName>
        <fullName>DNA repair protein RAD14</fullName>
    </recommendedName>
</protein>
<organism>
    <name type="scientific">Candida albicans (strain SC5314 / ATCC MYA-2876)</name>
    <name type="common">Yeast</name>
    <dbReference type="NCBI Taxonomy" id="237561"/>
    <lineage>
        <taxon>Eukaryota</taxon>
        <taxon>Fungi</taxon>
        <taxon>Dikarya</taxon>
        <taxon>Ascomycota</taxon>
        <taxon>Saccharomycotina</taxon>
        <taxon>Pichiomycetes</taxon>
        <taxon>Debaryomycetaceae</taxon>
        <taxon>Candida/Lodderomyces clade</taxon>
        <taxon>Candida</taxon>
    </lineage>
</organism>
<reference key="1">
    <citation type="journal article" date="2005" name="Genetics">
        <title>Sequence finishing and gene mapping for Candida albicans chromosome 7 and syntenic analysis against the Saccharomyces cerevisiae genome.</title>
        <authorList>
            <person name="Chibana H."/>
            <person name="Oka N."/>
            <person name="Nakayama H."/>
            <person name="Aoyama T."/>
            <person name="Magee B.B."/>
            <person name="Magee P.T."/>
            <person name="Mikami Y."/>
        </authorList>
    </citation>
    <scope>NUCLEOTIDE SEQUENCE [LARGE SCALE GENOMIC DNA]</scope>
    <source>
        <strain>SC5314 / ATCC MYA-2876</strain>
    </source>
</reference>
<reference key="2">
    <citation type="journal article" date="2004" name="Proc. Natl. Acad. Sci. U.S.A.">
        <title>The diploid genome sequence of Candida albicans.</title>
        <authorList>
            <person name="Jones T."/>
            <person name="Federspiel N.A."/>
            <person name="Chibana H."/>
            <person name="Dungan J."/>
            <person name="Kalman S."/>
            <person name="Magee B.B."/>
            <person name="Newport G."/>
            <person name="Thorstenson Y.R."/>
            <person name="Agabian N."/>
            <person name="Magee P.T."/>
            <person name="Davis R.W."/>
            <person name="Scherer S."/>
        </authorList>
    </citation>
    <scope>NUCLEOTIDE SEQUENCE [LARGE SCALE GENOMIC DNA]</scope>
    <source>
        <strain>SC5314 / ATCC MYA-2876</strain>
    </source>
</reference>
<reference key="3">
    <citation type="journal article" date="2007" name="Genome Biol.">
        <title>Assembly of the Candida albicans genome into sixteen supercontigs aligned on the eight chromosomes.</title>
        <authorList>
            <person name="van het Hoog M."/>
            <person name="Rast T.J."/>
            <person name="Martchenko M."/>
            <person name="Grindle S."/>
            <person name="Dignard D."/>
            <person name="Hogues H."/>
            <person name="Cuomo C."/>
            <person name="Berriman M."/>
            <person name="Scherer S."/>
            <person name="Magee B.B."/>
            <person name="Whiteway M."/>
            <person name="Chibana H."/>
            <person name="Nantel A."/>
            <person name="Magee P.T."/>
        </authorList>
    </citation>
    <scope>GENOME REANNOTATION</scope>
    <source>
        <strain>SC5314 / ATCC MYA-2876</strain>
    </source>
</reference>
<reference key="4">
    <citation type="journal article" date="2013" name="Genome Biol.">
        <title>Assembly of a phased diploid Candida albicans genome facilitates allele-specific measurements and provides a simple model for repeat and indel structure.</title>
        <authorList>
            <person name="Muzzey D."/>
            <person name="Schwartz K."/>
            <person name="Weissman J.S."/>
            <person name="Sherlock G."/>
        </authorList>
    </citation>
    <scope>NUCLEOTIDE SEQUENCE [LARGE SCALE GENOMIC DNA]</scope>
    <scope>GENOME REANNOTATION</scope>
    <source>
        <strain>SC5314 / ATCC MYA-2876</strain>
    </source>
</reference>
<reference key="5">
    <citation type="journal article" date="1995" name="Infect. Immun.">
        <title>Structure and regulation of the HSP90 gene from the pathogenic fungus Candida albicans.</title>
        <authorList>
            <person name="Swoboda R.K."/>
            <person name="Bertram G."/>
            <person name="Budge S."/>
            <person name="Gooday G.W."/>
            <person name="Gow N.A.R."/>
            <person name="Brown A.J.P."/>
        </authorList>
    </citation>
    <scope>NUCLEOTIDE SEQUENCE [GENOMIC DNA] OF 276-396</scope>
    <source>
        <strain>ATCC 10261 / CBS 2718 / NBRC 1061</strain>
    </source>
</reference>
<evidence type="ECO:0000250" key="1">
    <source>
        <dbReference type="UniProtKB" id="O59753"/>
    </source>
</evidence>
<evidence type="ECO:0000250" key="2">
    <source>
        <dbReference type="UniProtKB" id="P28519"/>
    </source>
</evidence>
<evidence type="ECO:0000256" key="3">
    <source>
        <dbReference type="SAM" id="MobiDB-lite"/>
    </source>
</evidence>
<evidence type="ECO:0000305" key="4"/>
<gene>
    <name type="primary">RAD14</name>
    <name type="ordered locus">CAALFM_C702020WA</name>
    <name type="ORF">CaJ7.0232</name>
    <name type="ORF">CaO19.13870</name>
    <name type="ORF">CaO19.6517</name>
</gene>